<accession>A7ZWB1</accession>
<dbReference type="EMBL" id="CP000802">
    <property type="protein sequence ID" value="ABV04565.1"/>
    <property type="molecule type" value="Genomic_DNA"/>
</dbReference>
<dbReference type="RefSeq" id="WP_000272188.1">
    <property type="nucleotide sequence ID" value="NC_009800.1"/>
</dbReference>
<dbReference type="SMR" id="A7ZWB1"/>
<dbReference type="KEGG" id="ecx:EcHS_A0167"/>
<dbReference type="HOGENOM" id="CLU_136774_0_0_6"/>
<dbReference type="HAMAP" id="MF_01519">
    <property type="entry name" value="UPF0325"/>
    <property type="match status" value="1"/>
</dbReference>
<dbReference type="InterPro" id="IPR020911">
    <property type="entry name" value="UPF0325"/>
</dbReference>
<dbReference type="NCBIfam" id="NF010213">
    <property type="entry name" value="PRK13677.1"/>
    <property type="match status" value="1"/>
</dbReference>
<dbReference type="Pfam" id="PF11944">
    <property type="entry name" value="DUF3461"/>
    <property type="match status" value="1"/>
</dbReference>
<feature type="chain" id="PRO_1000068617" description="UPF0325 protein YaeH">
    <location>
        <begin position="1"/>
        <end position="128"/>
    </location>
</feature>
<proteinExistence type="inferred from homology"/>
<reference key="1">
    <citation type="journal article" date="2008" name="J. Bacteriol.">
        <title>The pangenome structure of Escherichia coli: comparative genomic analysis of E. coli commensal and pathogenic isolates.</title>
        <authorList>
            <person name="Rasko D.A."/>
            <person name="Rosovitz M.J."/>
            <person name="Myers G.S.A."/>
            <person name="Mongodin E.F."/>
            <person name="Fricke W.F."/>
            <person name="Gajer P."/>
            <person name="Crabtree J."/>
            <person name="Sebaihia M."/>
            <person name="Thomson N.R."/>
            <person name="Chaudhuri R."/>
            <person name="Henderson I.R."/>
            <person name="Sperandio V."/>
            <person name="Ravel J."/>
        </authorList>
    </citation>
    <scope>NUCLEOTIDE SEQUENCE [LARGE SCALE GENOMIC DNA]</scope>
    <source>
        <strain>HS</strain>
    </source>
</reference>
<name>YAEH_ECOHS</name>
<protein>
    <recommendedName>
        <fullName evidence="1">UPF0325 protein YaeH</fullName>
    </recommendedName>
</protein>
<evidence type="ECO:0000255" key="1">
    <source>
        <dbReference type="HAMAP-Rule" id="MF_01519"/>
    </source>
</evidence>
<sequence>MYDNLKSLGITNPEEIDRYSLRQEANNDILKIYFQKDKGEFFAKSVKFKYPRQRKTVVADGVGQGYKEVQEISPNLRYIIDELDQICQRDRSEVDLKRKILDDLRHLESVVTNKISEIEADLEKLTRK</sequence>
<comment type="similarity">
    <text evidence="1">Belongs to the UPF0325 family.</text>
</comment>
<gene>
    <name evidence="1" type="primary">yaeH</name>
    <name type="ordered locus">EcHS_A0167</name>
</gene>
<organism>
    <name type="scientific">Escherichia coli O9:H4 (strain HS)</name>
    <dbReference type="NCBI Taxonomy" id="331112"/>
    <lineage>
        <taxon>Bacteria</taxon>
        <taxon>Pseudomonadati</taxon>
        <taxon>Pseudomonadota</taxon>
        <taxon>Gammaproteobacteria</taxon>
        <taxon>Enterobacterales</taxon>
        <taxon>Enterobacteriaceae</taxon>
        <taxon>Escherichia</taxon>
    </lineage>
</organism>